<gene>
    <name type="ORF">DDB_G0291932</name>
</gene>
<protein>
    <recommendedName>
        <fullName>Putative uncharacterized transmembrane protein DDB_G0291932</fullName>
    </recommendedName>
</protein>
<reference key="1">
    <citation type="journal article" date="2005" name="Nature">
        <title>The genome of the social amoeba Dictyostelium discoideum.</title>
        <authorList>
            <person name="Eichinger L."/>
            <person name="Pachebat J.A."/>
            <person name="Gloeckner G."/>
            <person name="Rajandream M.A."/>
            <person name="Sucgang R."/>
            <person name="Berriman M."/>
            <person name="Song J."/>
            <person name="Olsen R."/>
            <person name="Szafranski K."/>
            <person name="Xu Q."/>
            <person name="Tunggal B."/>
            <person name="Kummerfeld S."/>
            <person name="Madera M."/>
            <person name="Konfortov B.A."/>
            <person name="Rivero F."/>
            <person name="Bankier A.T."/>
            <person name="Lehmann R."/>
            <person name="Hamlin N."/>
            <person name="Davies R."/>
            <person name="Gaudet P."/>
            <person name="Fey P."/>
            <person name="Pilcher K."/>
            <person name="Chen G."/>
            <person name="Saunders D."/>
            <person name="Sodergren E.J."/>
            <person name="Davis P."/>
            <person name="Kerhornou A."/>
            <person name="Nie X."/>
            <person name="Hall N."/>
            <person name="Anjard C."/>
            <person name="Hemphill L."/>
            <person name="Bason N."/>
            <person name="Farbrother P."/>
            <person name="Desany B."/>
            <person name="Just E."/>
            <person name="Morio T."/>
            <person name="Rost R."/>
            <person name="Churcher C.M."/>
            <person name="Cooper J."/>
            <person name="Haydock S."/>
            <person name="van Driessche N."/>
            <person name="Cronin A."/>
            <person name="Goodhead I."/>
            <person name="Muzny D.M."/>
            <person name="Mourier T."/>
            <person name="Pain A."/>
            <person name="Lu M."/>
            <person name="Harper D."/>
            <person name="Lindsay R."/>
            <person name="Hauser H."/>
            <person name="James K.D."/>
            <person name="Quiles M."/>
            <person name="Madan Babu M."/>
            <person name="Saito T."/>
            <person name="Buchrieser C."/>
            <person name="Wardroper A."/>
            <person name="Felder M."/>
            <person name="Thangavelu M."/>
            <person name="Johnson D."/>
            <person name="Knights A."/>
            <person name="Loulseged H."/>
            <person name="Mungall K.L."/>
            <person name="Oliver K."/>
            <person name="Price C."/>
            <person name="Quail M.A."/>
            <person name="Urushihara H."/>
            <person name="Hernandez J."/>
            <person name="Rabbinowitsch E."/>
            <person name="Steffen D."/>
            <person name="Sanders M."/>
            <person name="Ma J."/>
            <person name="Kohara Y."/>
            <person name="Sharp S."/>
            <person name="Simmonds M.N."/>
            <person name="Spiegler S."/>
            <person name="Tivey A."/>
            <person name="Sugano S."/>
            <person name="White B."/>
            <person name="Walker D."/>
            <person name="Woodward J.R."/>
            <person name="Winckler T."/>
            <person name="Tanaka Y."/>
            <person name="Shaulsky G."/>
            <person name="Schleicher M."/>
            <person name="Weinstock G.M."/>
            <person name="Rosenthal A."/>
            <person name="Cox E.C."/>
            <person name="Chisholm R.L."/>
            <person name="Gibbs R.A."/>
            <person name="Loomis W.F."/>
            <person name="Platzer M."/>
            <person name="Kay R.R."/>
            <person name="Williams J.G."/>
            <person name="Dear P.H."/>
            <person name="Noegel A.A."/>
            <person name="Barrell B.G."/>
            <person name="Kuspa A."/>
        </authorList>
    </citation>
    <scope>NUCLEOTIDE SEQUENCE [LARGE SCALE GENOMIC DNA]</scope>
    <source>
        <strain>AX4</strain>
    </source>
</reference>
<sequence length="100" mass="11544">MVNDRLYICYCDNGYILIDNTINPYCLLINGSTSPNTTTTIIINNTSNNNNNNNNNHMNWTIPIVIIVSIFILLIIGSISLYLYKKYCSKPKRVHYQLIR</sequence>
<accession>Q54DY5</accession>
<name>Y1609_DICDI</name>
<comment type="subcellular location">
    <subcellularLocation>
        <location evidence="2">Membrane</location>
        <topology evidence="2">Single-pass membrane protein</topology>
    </subcellularLocation>
</comment>
<feature type="chain" id="PRO_0000344383" description="Putative uncharacterized transmembrane protein DDB_G0291932">
    <location>
        <begin position="1"/>
        <end position="100"/>
    </location>
</feature>
<feature type="transmembrane region" description="Helical" evidence="1">
    <location>
        <begin position="62"/>
        <end position="82"/>
    </location>
</feature>
<proteinExistence type="predicted"/>
<keyword id="KW-0472">Membrane</keyword>
<keyword id="KW-1185">Reference proteome</keyword>
<keyword id="KW-0812">Transmembrane</keyword>
<keyword id="KW-1133">Transmembrane helix</keyword>
<evidence type="ECO:0000255" key="1"/>
<evidence type="ECO:0000305" key="2"/>
<dbReference type="EMBL" id="AAFI02000186">
    <property type="protein sequence ID" value="EAL61496.1"/>
    <property type="molecule type" value="Genomic_DNA"/>
</dbReference>
<dbReference type="RefSeq" id="XP_629911.1">
    <property type="nucleotide sequence ID" value="XM_629909.1"/>
</dbReference>
<dbReference type="SMR" id="Q54DY5"/>
<dbReference type="PaxDb" id="44689-DDB0191609"/>
<dbReference type="EnsemblProtists" id="EAL61496">
    <property type="protein sequence ID" value="EAL61496"/>
    <property type="gene ID" value="DDB_G0291932"/>
</dbReference>
<dbReference type="GeneID" id="8628412"/>
<dbReference type="KEGG" id="ddi:DDB_G0291932"/>
<dbReference type="VEuPathDB" id="AmoebaDB:DDB_G0291932"/>
<dbReference type="HOGENOM" id="CLU_2311456_0_0_1"/>
<dbReference type="InParanoid" id="Q54DY5"/>
<dbReference type="PRO" id="PR:Q54DY5"/>
<dbReference type="Proteomes" id="UP000002195">
    <property type="component" value="Chromosome 6"/>
</dbReference>
<dbReference type="GO" id="GO:0016020">
    <property type="term" value="C:membrane"/>
    <property type="evidence" value="ECO:0007669"/>
    <property type="project" value="UniProtKB-SubCell"/>
</dbReference>
<organism>
    <name type="scientific">Dictyostelium discoideum</name>
    <name type="common">Social amoeba</name>
    <dbReference type="NCBI Taxonomy" id="44689"/>
    <lineage>
        <taxon>Eukaryota</taxon>
        <taxon>Amoebozoa</taxon>
        <taxon>Evosea</taxon>
        <taxon>Eumycetozoa</taxon>
        <taxon>Dictyostelia</taxon>
        <taxon>Dictyosteliales</taxon>
        <taxon>Dictyosteliaceae</taxon>
        <taxon>Dictyostelium</taxon>
    </lineage>
</organism>